<reference key="1">
    <citation type="journal article" date="1985" name="J. Mol. Evol.">
        <title>Evolution of two actin genes in the sea urchin Strongylocentrotus franciscanus.</title>
        <authorList>
            <person name="Foran D.R."/>
            <person name="Johnson P.J."/>
            <person name="Moore G.P."/>
        </authorList>
    </citation>
    <scope>NUCLEOTIDE SEQUENCE [GENOMIC DNA]</scope>
</reference>
<comment type="function">
    <text>Actins are highly conserved proteins that are involved in various types of cell motility and are ubiquitously expressed in all eukaryotic cells.</text>
</comment>
<comment type="catalytic activity">
    <reaction evidence="2">
        <text>ATP + H2O = ADP + phosphate + H(+)</text>
        <dbReference type="Rhea" id="RHEA:13065"/>
        <dbReference type="ChEBI" id="CHEBI:15377"/>
        <dbReference type="ChEBI" id="CHEBI:15378"/>
        <dbReference type="ChEBI" id="CHEBI:30616"/>
        <dbReference type="ChEBI" id="CHEBI:43474"/>
        <dbReference type="ChEBI" id="CHEBI:456216"/>
    </reaction>
</comment>
<comment type="subcellular location">
    <subcellularLocation>
        <location>Cytoplasm</location>
    </subcellularLocation>
    <subcellularLocation>
        <location>Cytoplasm</location>
        <location>Cytoskeleton</location>
    </subcellularLocation>
</comment>
<comment type="developmental stage">
    <text>Thought to be expressed early in embryogenesis.</text>
</comment>
<comment type="similarity">
    <text evidence="3">Belongs to the actin family.</text>
</comment>
<keyword id="KW-0007">Acetylation</keyword>
<keyword id="KW-0067">ATP-binding</keyword>
<keyword id="KW-0963">Cytoplasm</keyword>
<keyword id="KW-0206">Cytoskeleton</keyword>
<keyword id="KW-0378">Hydrolase</keyword>
<keyword id="KW-0547">Nucleotide-binding</keyword>
<feature type="propeptide" id="PRO_0000000720" description="Removed in mature form">
    <location>
        <begin position="1"/>
        <end position="2"/>
    </location>
</feature>
<feature type="chain" id="PRO_0000000721" description="Actin-15B">
    <location>
        <begin position="3"/>
        <end position="376"/>
    </location>
</feature>
<feature type="modified residue" description="N-acetylaspartate" evidence="1">
    <location>
        <position position="3"/>
    </location>
</feature>
<sequence>MCDDDVAALVIDNGSGMVKAGFAGDDAPRAVFPSIVGRPRHQGVMVGMGQKDSYVGDEAQSKRGILTLKYPIEHGIVTNWDDMEKIWHHTFYNELRVAPEEHPVLLTEAPLNPKANREKMTQIMFETFNSPAMYVAIQAVLSLYASGRTTGIVFDSGDGVSHTVPIYEGYALPHAILRLDLAGRDLTDYLMKILTERGYSFTTTAEREIVRDIKEKLCYVALDFEQEMQTAASSSSLEKSYELPDGQVITIGNERFRAPEALFQPAFLGMESAGIHETCYNSIMKCDVDIRKDLYANTVLSGGSTMFPGIADRMQKEITALAPPTMKIKIIAPPERKYSVWIGGSILASLSTFQQMWISKQEYDESGPSIVHRKCF</sequence>
<evidence type="ECO:0000250" key="1"/>
<evidence type="ECO:0000250" key="2">
    <source>
        <dbReference type="UniProtKB" id="P68137"/>
    </source>
</evidence>
<evidence type="ECO:0000305" key="3"/>
<name>ACT2_MESFR</name>
<dbReference type="EC" id="3.6.4.-" evidence="2"/>
<dbReference type="EMBL" id="X03076">
    <property type="protein sequence ID" value="CAA26878.1"/>
    <property type="molecule type" value="Genomic_DNA"/>
</dbReference>
<dbReference type="PIR" id="S09578">
    <property type="entry name" value="S09578"/>
</dbReference>
<dbReference type="SMR" id="P69004"/>
<dbReference type="GO" id="GO:0005737">
    <property type="term" value="C:cytoplasm"/>
    <property type="evidence" value="ECO:0007669"/>
    <property type="project" value="UniProtKB-SubCell"/>
</dbReference>
<dbReference type="GO" id="GO:0005856">
    <property type="term" value="C:cytoskeleton"/>
    <property type="evidence" value="ECO:0007669"/>
    <property type="project" value="UniProtKB-SubCell"/>
</dbReference>
<dbReference type="GO" id="GO:0005524">
    <property type="term" value="F:ATP binding"/>
    <property type="evidence" value="ECO:0007669"/>
    <property type="project" value="UniProtKB-KW"/>
</dbReference>
<dbReference type="GO" id="GO:0016787">
    <property type="term" value="F:hydrolase activity"/>
    <property type="evidence" value="ECO:0007669"/>
    <property type="project" value="UniProtKB-KW"/>
</dbReference>
<dbReference type="CDD" id="cd10224">
    <property type="entry name" value="ASKHA_NBD_actin"/>
    <property type="match status" value="1"/>
</dbReference>
<dbReference type="FunFam" id="3.30.420.40:FF:000131">
    <property type="entry name" value="Actin, alpha skeletal muscle"/>
    <property type="match status" value="1"/>
</dbReference>
<dbReference type="FunFam" id="3.30.420.40:FF:000291">
    <property type="entry name" value="Actin, alpha skeletal muscle"/>
    <property type="match status" value="1"/>
</dbReference>
<dbReference type="FunFam" id="3.90.640.10:FF:000047">
    <property type="entry name" value="Actin, alpha skeletal muscle"/>
    <property type="match status" value="1"/>
</dbReference>
<dbReference type="FunFam" id="3.30.420.40:FF:000058">
    <property type="entry name" value="Putative actin-related protein 5"/>
    <property type="match status" value="1"/>
</dbReference>
<dbReference type="Gene3D" id="3.30.420.40">
    <property type="match status" value="2"/>
</dbReference>
<dbReference type="Gene3D" id="3.90.640.10">
    <property type="entry name" value="Actin, Chain A, domain 4"/>
    <property type="match status" value="1"/>
</dbReference>
<dbReference type="InterPro" id="IPR004000">
    <property type="entry name" value="Actin"/>
</dbReference>
<dbReference type="InterPro" id="IPR020902">
    <property type="entry name" value="Actin/actin-like_CS"/>
</dbReference>
<dbReference type="InterPro" id="IPR004001">
    <property type="entry name" value="Actin_CS"/>
</dbReference>
<dbReference type="InterPro" id="IPR043129">
    <property type="entry name" value="ATPase_NBD"/>
</dbReference>
<dbReference type="PANTHER" id="PTHR11937">
    <property type="entry name" value="ACTIN"/>
    <property type="match status" value="1"/>
</dbReference>
<dbReference type="Pfam" id="PF00022">
    <property type="entry name" value="Actin"/>
    <property type="match status" value="1"/>
</dbReference>
<dbReference type="PRINTS" id="PR00190">
    <property type="entry name" value="ACTIN"/>
</dbReference>
<dbReference type="SMART" id="SM00268">
    <property type="entry name" value="ACTIN"/>
    <property type="match status" value="1"/>
</dbReference>
<dbReference type="SUPFAM" id="SSF53067">
    <property type="entry name" value="Actin-like ATPase domain"/>
    <property type="match status" value="2"/>
</dbReference>
<dbReference type="PROSITE" id="PS00406">
    <property type="entry name" value="ACTINS_1"/>
    <property type="match status" value="1"/>
</dbReference>
<dbReference type="PROSITE" id="PS00432">
    <property type="entry name" value="ACTINS_2"/>
    <property type="match status" value="1"/>
</dbReference>
<dbReference type="PROSITE" id="PS01132">
    <property type="entry name" value="ACTINS_ACT_LIKE"/>
    <property type="match status" value="1"/>
</dbReference>
<accession>P69004</accession>
<accession>P02573</accession>
<accession>P10991</accession>
<protein>
    <recommendedName>
        <fullName>Actin-15B</fullName>
        <ecNumber evidence="2">3.6.4.-</ecNumber>
    </recommendedName>
</protein>
<proteinExistence type="evidence at transcript level"/>
<organism>
    <name type="scientific">Mesocentrotus franciscanus</name>
    <name type="common">Giant red sea urchin</name>
    <name type="synonym">Strongylocentrotus franciscanus</name>
    <dbReference type="NCBI Taxonomy" id="1328066"/>
    <lineage>
        <taxon>Eukaryota</taxon>
        <taxon>Metazoa</taxon>
        <taxon>Echinodermata</taxon>
        <taxon>Eleutherozoa</taxon>
        <taxon>Echinozoa</taxon>
        <taxon>Echinoidea</taxon>
        <taxon>Euechinoidea</taxon>
        <taxon>Echinacea</taxon>
        <taxon>Camarodonta</taxon>
        <taxon>Echinidea</taxon>
        <taxon>Strongylocentrotidae</taxon>
        <taxon>Mesocentrotus</taxon>
    </lineage>
</organism>